<proteinExistence type="inferred from homology"/>
<reference key="1">
    <citation type="journal article" date="1990" name="J. Mol. Biol.">
        <title>Evolution of the autosomal chorion cluster in Drosophila. III. Comparison of the s18 gene in evolutionarily distant species and heterospecific control of chorion gene amplification.</title>
        <authorList>
            <person name="Swimmer C."/>
            <person name="Fenerjian M.G."/>
            <person name="Martinez-Cruzado J.C."/>
            <person name="Kafatos F.C."/>
        </authorList>
    </citation>
    <scope>NUCLEOTIDE SEQUENCE [GENOMIC DNA]</scope>
</reference>
<organism>
    <name type="scientific">Drosophila subobscura</name>
    <name type="common">Fruit fly</name>
    <dbReference type="NCBI Taxonomy" id="7241"/>
    <lineage>
        <taxon>Eukaryota</taxon>
        <taxon>Metazoa</taxon>
        <taxon>Ecdysozoa</taxon>
        <taxon>Arthropoda</taxon>
        <taxon>Hexapoda</taxon>
        <taxon>Insecta</taxon>
        <taxon>Pterygota</taxon>
        <taxon>Neoptera</taxon>
        <taxon>Endopterygota</taxon>
        <taxon>Diptera</taxon>
        <taxon>Brachycera</taxon>
        <taxon>Muscomorpha</taxon>
        <taxon>Ephydroidea</taxon>
        <taxon>Drosophilidae</taxon>
        <taxon>Drosophila</taxon>
        <taxon>Sophophora</taxon>
    </lineage>
</organism>
<evidence type="ECO:0000250" key="1"/>
<evidence type="ECO:0000255" key="2"/>
<evidence type="ECO:0000256" key="3">
    <source>
        <dbReference type="SAM" id="MobiDB-lite"/>
    </source>
</evidence>
<evidence type="ECO:0000305" key="4"/>
<sequence>MMKFMCIFICAVAAVSASGYGGRRPSYGSAPIGAYAYQVQPALTVKAIIPSYGGQRGYGHNQGGYEAAPIASAYGNADIGNQYGPVSGSRYGGAPPVDREAIALAKLALAAPSAGGPLVWREAPRRVQHAYGPSNYGAPQQRYARAEEAQGASAAAASSSVAGVAKKGYRKSSY</sequence>
<name>CH18_DROSU</name>
<keyword id="KW-0964">Secreted</keyword>
<keyword id="KW-0732">Signal</keyword>
<feature type="signal peptide" evidence="2">
    <location>
        <begin position="1"/>
        <end position="17"/>
    </location>
</feature>
<feature type="chain" id="PRO_0000089622" description="Chorion protein S18">
    <location>
        <begin position="18"/>
        <end position="174"/>
    </location>
</feature>
<feature type="region of interest" description="Disordered" evidence="3">
    <location>
        <begin position="154"/>
        <end position="174"/>
    </location>
</feature>
<feature type="compositionally biased region" description="Low complexity" evidence="3">
    <location>
        <begin position="154"/>
        <end position="165"/>
    </location>
</feature>
<accession>P24514</accession>
<dbReference type="EMBL" id="X53423">
    <property type="protein sequence ID" value="CAA37508.1"/>
    <property type="molecule type" value="Genomic_DNA"/>
</dbReference>
<dbReference type="PIR" id="S13217">
    <property type="entry name" value="S13217"/>
</dbReference>
<dbReference type="EnsemblMetazoa" id="XM_034799553.1">
    <property type="protein sequence ID" value="XP_034655444.1"/>
    <property type="gene ID" value="LOC117893115"/>
</dbReference>
<dbReference type="GO" id="GO:0042600">
    <property type="term" value="C:egg chorion"/>
    <property type="evidence" value="ECO:0007669"/>
    <property type="project" value="InterPro"/>
</dbReference>
<dbReference type="GO" id="GO:0005576">
    <property type="term" value="C:extracellular region"/>
    <property type="evidence" value="ECO:0007669"/>
    <property type="project" value="UniProtKB-SubCell"/>
</dbReference>
<dbReference type="InterPro" id="IPR005649">
    <property type="entry name" value="Chorion_2"/>
</dbReference>
<dbReference type="Pfam" id="PF03964">
    <property type="entry name" value="Chorion_2"/>
    <property type="match status" value="1"/>
</dbReference>
<comment type="function">
    <text evidence="1">Chorion membrane (egg shell) protein; plays a role in protecting the egg from the environment.</text>
</comment>
<comment type="subcellular location">
    <subcellularLocation>
        <location evidence="1">Secreted</location>
    </subcellularLocation>
</comment>
<comment type="similarity">
    <text evidence="4">Belongs to the chorion protein S15/S18 family.</text>
</comment>
<gene>
    <name type="primary">Cp18</name>
    <name type="synonym">S18</name>
</gene>
<protein>
    <recommendedName>
        <fullName>Chorion protein S18</fullName>
    </recommendedName>
</protein>